<feature type="chain" id="PRO_1000139892" description="HPr kinase/phosphorylase">
    <location>
        <begin position="1"/>
        <end position="322"/>
    </location>
</feature>
<feature type="region of interest" description="Important for the catalytic mechanism of both phosphorylation and dephosphorylation" evidence="1">
    <location>
        <begin position="209"/>
        <end position="218"/>
    </location>
</feature>
<feature type="region of interest" description="Important for the catalytic mechanism of dephosphorylation" evidence="1">
    <location>
        <begin position="271"/>
        <end position="276"/>
    </location>
</feature>
<feature type="active site" evidence="1">
    <location>
        <position position="146"/>
    </location>
</feature>
<feature type="active site" evidence="1">
    <location>
        <position position="167"/>
    </location>
</feature>
<feature type="active site" description="Proton acceptor; for phosphorylation activity. Proton donor; for dephosphorylation activity" evidence="1">
    <location>
        <position position="185"/>
    </location>
</feature>
<feature type="active site" evidence="1">
    <location>
        <position position="250"/>
    </location>
</feature>
<feature type="binding site" evidence="1">
    <location>
        <begin position="161"/>
        <end position="168"/>
    </location>
    <ligand>
        <name>ATP</name>
        <dbReference type="ChEBI" id="CHEBI:30616"/>
    </ligand>
</feature>
<feature type="binding site" evidence="1">
    <location>
        <position position="168"/>
    </location>
    <ligand>
        <name>Mg(2+)</name>
        <dbReference type="ChEBI" id="CHEBI:18420"/>
    </ligand>
</feature>
<feature type="binding site" evidence="1">
    <location>
        <position position="210"/>
    </location>
    <ligand>
        <name>Mg(2+)</name>
        <dbReference type="ChEBI" id="CHEBI:18420"/>
    </ligand>
</feature>
<proteinExistence type="inferred from homology"/>
<organism>
    <name type="scientific">Paraburkholderia phymatum (strain DSM 17167 / CIP 108236 / LMG 21445 / STM815)</name>
    <name type="common">Burkholderia phymatum</name>
    <dbReference type="NCBI Taxonomy" id="391038"/>
    <lineage>
        <taxon>Bacteria</taxon>
        <taxon>Pseudomonadati</taxon>
        <taxon>Pseudomonadota</taxon>
        <taxon>Betaproteobacteria</taxon>
        <taxon>Burkholderiales</taxon>
        <taxon>Burkholderiaceae</taxon>
        <taxon>Paraburkholderia</taxon>
    </lineage>
</organism>
<gene>
    <name evidence="1" type="primary">hprK</name>
    <name type="ordered locus">Bphy_0323</name>
</gene>
<keyword id="KW-0067">ATP-binding</keyword>
<keyword id="KW-0418">Kinase</keyword>
<keyword id="KW-0460">Magnesium</keyword>
<keyword id="KW-0479">Metal-binding</keyword>
<keyword id="KW-0511">Multifunctional enzyme</keyword>
<keyword id="KW-0547">Nucleotide-binding</keyword>
<keyword id="KW-1185">Reference proteome</keyword>
<keyword id="KW-0723">Serine/threonine-protein kinase</keyword>
<keyword id="KW-0808">Transferase</keyword>
<name>HPRK_PARP8</name>
<sequence length="322" mass="35147">MDTSSINAQSIFDDNAAALKLSWLTGHEGWERGFSAETVATATSSADLVGHLNLIHPNRIQVLGEAETNYYQRQSDEDRSRHMAELIALEPPFLVVAGGVAAPPELVLRCTRSSTPLFTTPMSPAAVIDSLRLYMSRILAPRATLHGVFLDILGMGVLLTGDSGLGKSELGLELISRGHGLVADDAVDFVRLGPDFVEGRCPPLLQNLLEVRGLGLLDIKTIFGETAVRRKMKLKLIVQLVRRPDGEFQRLPLESQTVDVLGLPISKVTIQVAAGRNLAVLVEAAVRNTILQLRGIDTLRDFMDRQRLAMQDPDSQFPGKLI</sequence>
<protein>
    <recommendedName>
        <fullName evidence="1">HPr kinase/phosphorylase</fullName>
        <shortName evidence="1">HPrK/P</shortName>
        <ecNumber evidence="1">2.7.11.-</ecNumber>
        <ecNumber evidence="1">2.7.4.-</ecNumber>
    </recommendedName>
    <alternativeName>
        <fullName evidence="1">HPr(Ser) kinase/phosphorylase</fullName>
    </alternativeName>
</protein>
<evidence type="ECO:0000255" key="1">
    <source>
        <dbReference type="HAMAP-Rule" id="MF_01249"/>
    </source>
</evidence>
<accession>B2JCP7</accession>
<dbReference type="EC" id="2.7.11.-" evidence="1"/>
<dbReference type="EC" id="2.7.4.-" evidence="1"/>
<dbReference type="EMBL" id="CP001043">
    <property type="protein sequence ID" value="ACC69516.1"/>
    <property type="molecule type" value="Genomic_DNA"/>
</dbReference>
<dbReference type="RefSeq" id="WP_007579699.1">
    <property type="nucleotide sequence ID" value="NZ_CADFGH010000001.1"/>
</dbReference>
<dbReference type="SMR" id="B2JCP7"/>
<dbReference type="STRING" id="391038.Bphy_0323"/>
<dbReference type="GeneID" id="69967433"/>
<dbReference type="KEGG" id="bph:Bphy_0323"/>
<dbReference type="eggNOG" id="COG1493">
    <property type="taxonomic scope" value="Bacteria"/>
</dbReference>
<dbReference type="HOGENOM" id="CLU_052030_0_2_4"/>
<dbReference type="OrthoDB" id="9778803at2"/>
<dbReference type="Proteomes" id="UP000001192">
    <property type="component" value="Chromosome 1"/>
</dbReference>
<dbReference type="GO" id="GO:0005524">
    <property type="term" value="F:ATP binding"/>
    <property type="evidence" value="ECO:0007669"/>
    <property type="project" value="UniProtKB-UniRule"/>
</dbReference>
<dbReference type="GO" id="GO:0000287">
    <property type="term" value="F:magnesium ion binding"/>
    <property type="evidence" value="ECO:0007669"/>
    <property type="project" value="UniProtKB-UniRule"/>
</dbReference>
<dbReference type="GO" id="GO:0000155">
    <property type="term" value="F:phosphorelay sensor kinase activity"/>
    <property type="evidence" value="ECO:0007669"/>
    <property type="project" value="InterPro"/>
</dbReference>
<dbReference type="GO" id="GO:0004674">
    <property type="term" value="F:protein serine/threonine kinase activity"/>
    <property type="evidence" value="ECO:0007669"/>
    <property type="project" value="UniProtKB-KW"/>
</dbReference>
<dbReference type="GO" id="GO:0004712">
    <property type="term" value="F:protein serine/threonine/tyrosine kinase activity"/>
    <property type="evidence" value="ECO:0007669"/>
    <property type="project" value="UniProtKB-UniRule"/>
</dbReference>
<dbReference type="GO" id="GO:0006109">
    <property type="term" value="P:regulation of carbohydrate metabolic process"/>
    <property type="evidence" value="ECO:0007669"/>
    <property type="project" value="UniProtKB-UniRule"/>
</dbReference>
<dbReference type="CDD" id="cd01918">
    <property type="entry name" value="HprK_C"/>
    <property type="match status" value="1"/>
</dbReference>
<dbReference type="FunFam" id="3.40.50.300:FF:000174">
    <property type="entry name" value="HPr kinase/phosphorylase"/>
    <property type="match status" value="1"/>
</dbReference>
<dbReference type="Gene3D" id="3.40.1390.20">
    <property type="entry name" value="HprK N-terminal domain-like"/>
    <property type="match status" value="1"/>
</dbReference>
<dbReference type="Gene3D" id="3.40.50.300">
    <property type="entry name" value="P-loop containing nucleotide triphosphate hydrolases"/>
    <property type="match status" value="1"/>
</dbReference>
<dbReference type="HAMAP" id="MF_01249">
    <property type="entry name" value="HPr_kinase"/>
    <property type="match status" value="1"/>
</dbReference>
<dbReference type="InterPro" id="IPR003755">
    <property type="entry name" value="HPr(Ser)_kin/Pase"/>
</dbReference>
<dbReference type="InterPro" id="IPR011104">
    <property type="entry name" value="Hpr_kin/Pase_C"/>
</dbReference>
<dbReference type="InterPro" id="IPR011126">
    <property type="entry name" value="Hpr_kin/Pase_Hpr_N"/>
</dbReference>
<dbReference type="InterPro" id="IPR027417">
    <property type="entry name" value="P-loop_NTPase"/>
</dbReference>
<dbReference type="InterPro" id="IPR028979">
    <property type="entry name" value="Ser_kin/Pase_Hpr-like_N_sf"/>
</dbReference>
<dbReference type="NCBIfam" id="TIGR00679">
    <property type="entry name" value="hpr-ser"/>
    <property type="match status" value="1"/>
</dbReference>
<dbReference type="PANTHER" id="PTHR30305:SF1">
    <property type="entry name" value="HPR KINASE_PHOSPHORYLASE"/>
    <property type="match status" value="1"/>
</dbReference>
<dbReference type="PANTHER" id="PTHR30305">
    <property type="entry name" value="PROTEIN YJDM-RELATED"/>
    <property type="match status" value="1"/>
</dbReference>
<dbReference type="Pfam" id="PF07475">
    <property type="entry name" value="Hpr_kinase_C"/>
    <property type="match status" value="1"/>
</dbReference>
<dbReference type="Pfam" id="PF02603">
    <property type="entry name" value="Hpr_kinase_N"/>
    <property type="match status" value="1"/>
</dbReference>
<dbReference type="SUPFAM" id="SSF75138">
    <property type="entry name" value="HprK N-terminal domain-like"/>
    <property type="match status" value="1"/>
</dbReference>
<dbReference type="SUPFAM" id="SSF53795">
    <property type="entry name" value="PEP carboxykinase-like"/>
    <property type="match status" value="1"/>
</dbReference>
<reference key="1">
    <citation type="journal article" date="2014" name="Stand. Genomic Sci.">
        <title>Complete genome sequence of Burkholderia phymatum STM815(T), a broad host range and efficient nitrogen-fixing symbiont of Mimosa species.</title>
        <authorList>
            <person name="Moulin L."/>
            <person name="Klonowska A."/>
            <person name="Caroline B."/>
            <person name="Booth K."/>
            <person name="Vriezen J.A."/>
            <person name="Melkonian R."/>
            <person name="James E.K."/>
            <person name="Young J.P."/>
            <person name="Bena G."/>
            <person name="Hauser L."/>
            <person name="Land M."/>
            <person name="Kyrpides N."/>
            <person name="Bruce D."/>
            <person name="Chain P."/>
            <person name="Copeland A."/>
            <person name="Pitluck S."/>
            <person name="Woyke T."/>
            <person name="Lizotte-Waniewski M."/>
            <person name="Bristow J."/>
            <person name="Riley M."/>
        </authorList>
    </citation>
    <scope>NUCLEOTIDE SEQUENCE [LARGE SCALE GENOMIC DNA]</scope>
    <source>
        <strain>DSM 17167 / CIP 108236 / LMG 21445 / STM815</strain>
    </source>
</reference>
<comment type="function">
    <text evidence="1">Catalyzes the ATP- as well as the pyrophosphate-dependent phosphorylation of a specific serine residue in HPr, a phosphocarrier protein of the phosphoenolpyruvate-dependent sugar phosphotransferase system (PTS). HprK/P also catalyzes the pyrophosphate-producing, inorganic phosphate-dependent dephosphorylation (phosphorolysis) of seryl-phosphorylated HPr (P-Ser-HPr).</text>
</comment>
<comment type="catalytic activity">
    <reaction evidence="1">
        <text>[HPr protein]-L-serine + ATP = [HPr protein]-O-phospho-L-serine + ADP + H(+)</text>
        <dbReference type="Rhea" id="RHEA:46600"/>
        <dbReference type="Rhea" id="RHEA-COMP:11602"/>
        <dbReference type="Rhea" id="RHEA-COMP:11603"/>
        <dbReference type="ChEBI" id="CHEBI:15378"/>
        <dbReference type="ChEBI" id="CHEBI:29999"/>
        <dbReference type="ChEBI" id="CHEBI:30616"/>
        <dbReference type="ChEBI" id="CHEBI:83421"/>
        <dbReference type="ChEBI" id="CHEBI:456216"/>
    </reaction>
</comment>
<comment type="catalytic activity">
    <reaction evidence="1">
        <text>[HPr protein]-O-phospho-L-serine + phosphate + H(+) = [HPr protein]-L-serine + diphosphate</text>
        <dbReference type="Rhea" id="RHEA:46604"/>
        <dbReference type="Rhea" id="RHEA-COMP:11602"/>
        <dbReference type="Rhea" id="RHEA-COMP:11603"/>
        <dbReference type="ChEBI" id="CHEBI:15378"/>
        <dbReference type="ChEBI" id="CHEBI:29999"/>
        <dbReference type="ChEBI" id="CHEBI:33019"/>
        <dbReference type="ChEBI" id="CHEBI:43474"/>
        <dbReference type="ChEBI" id="CHEBI:83421"/>
    </reaction>
</comment>
<comment type="cofactor">
    <cofactor evidence="1">
        <name>Mg(2+)</name>
        <dbReference type="ChEBI" id="CHEBI:18420"/>
    </cofactor>
</comment>
<comment type="subunit">
    <text evidence="1">Homohexamer.</text>
</comment>
<comment type="domain">
    <text evidence="1">The Walker A ATP-binding motif also binds Pi and PPi.</text>
</comment>
<comment type="miscellaneous">
    <text evidence="1">Both phosphorylation and phosphorolysis are carried out by the same active site and suggest a common mechanism for both reactions.</text>
</comment>
<comment type="similarity">
    <text evidence="1">Belongs to the HPrK/P family.</text>
</comment>